<reference key="1">
    <citation type="journal article" date="2005" name="J. Bacteriol.">
        <title>Whole-genome sequence analysis of Pseudomonas syringae pv. phaseolicola 1448A reveals divergence among pathovars in genes involved in virulence and transposition.</title>
        <authorList>
            <person name="Joardar V."/>
            <person name="Lindeberg M."/>
            <person name="Jackson R.W."/>
            <person name="Selengut J."/>
            <person name="Dodson R."/>
            <person name="Brinkac L.M."/>
            <person name="Daugherty S.C."/>
            <person name="DeBoy R.T."/>
            <person name="Durkin A.S."/>
            <person name="Gwinn Giglio M."/>
            <person name="Madupu R."/>
            <person name="Nelson W.C."/>
            <person name="Rosovitz M.J."/>
            <person name="Sullivan S.A."/>
            <person name="Crabtree J."/>
            <person name="Creasy T."/>
            <person name="Davidsen T.M."/>
            <person name="Haft D.H."/>
            <person name="Zafar N."/>
            <person name="Zhou L."/>
            <person name="Halpin R."/>
            <person name="Holley T."/>
            <person name="Khouri H.M."/>
            <person name="Feldblyum T.V."/>
            <person name="White O."/>
            <person name="Fraser C.M."/>
            <person name="Chatterjee A.K."/>
            <person name="Cartinhour S."/>
            <person name="Schneider D."/>
            <person name="Mansfield J.W."/>
            <person name="Collmer A."/>
            <person name="Buell R."/>
        </authorList>
    </citation>
    <scope>NUCLEOTIDE SEQUENCE [LARGE SCALE GENOMIC DNA]</scope>
    <source>
        <strain>1448A / Race 6</strain>
    </source>
</reference>
<gene>
    <name evidence="1" type="primary">glpK</name>
    <name type="ordered locus">PSPPH_3899</name>
</gene>
<organism>
    <name type="scientific">Pseudomonas savastanoi pv. phaseolicola (strain 1448A / Race 6)</name>
    <name type="common">Pseudomonas syringae pv. phaseolicola (strain 1448A / Race 6)</name>
    <dbReference type="NCBI Taxonomy" id="264730"/>
    <lineage>
        <taxon>Bacteria</taxon>
        <taxon>Pseudomonadati</taxon>
        <taxon>Pseudomonadota</taxon>
        <taxon>Gammaproteobacteria</taxon>
        <taxon>Pseudomonadales</taxon>
        <taxon>Pseudomonadaceae</taxon>
        <taxon>Pseudomonas</taxon>
    </lineage>
</organism>
<accession>Q48F01</accession>
<comment type="function">
    <text evidence="1">Key enzyme in the regulation of glycerol uptake and metabolism. Catalyzes the phosphorylation of glycerol to yield sn-glycerol 3-phosphate.</text>
</comment>
<comment type="catalytic activity">
    <reaction evidence="1">
        <text>glycerol + ATP = sn-glycerol 3-phosphate + ADP + H(+)</text>
        <dbReference type="Rhea" id="RHEA:21644"/>
        <dbReference type="ChEBI" id="CHEBI:15378"/>
        <dbReference type="ChEBI" id="CHEBI:17754"/>
        <dbReference type="ChEBI" id="CHEBI:30616"/>
        <dbReference type="ChEBI" id="CHEBI:57597"/>
        <dbReference type="ChEBI" id="CHEBI:456216"/>
        <dbReference type="EC" id="2.7.1.30"/>
    </reaction>
</comment>
<comment type="activity regulation">
    <text evidence="1">Inhibited by fructose 1,6-bisphosphate (FBP).</text>
</comment>
<comment type="pathway">
    <text evidence="1">Polyol metabolism; glycerol degradation via glycerol kinase pathway; sn-glycerol 3-phosphate from glycerol: step 1/1.</text>
</comment>
<comment type="similarity">
    <text evidence="1">Belongs to the FGGY kinase family.</text>
</comment>
<proteinExistence type="inferred from homology"/>
<name>GLPK_PSE14</name>
<evidence type="ECO:0000255" key="1">
    <source>
        <dbReference type="HAMAP-Rule" id="MF_00186"/>
    </source>
</evidence>
<dbReference type="EC" id="2.7.1.30" evidence="1"/>
<dbReference type="EMBL" id="CP000058">
    <property type="protein sequence ID" value="AAZ37820.1"/>
    <property type="molecule type" value="Genomic_DNA"/>
</dbReference>
<dbReference type="RefSeq" id="WP_011169329.1">
    <property type="nucleotide sequence ID" value="NC_005773.3"/>
</dbReference>
<dbReference type="SMR" id="Q48F01"/>
<dbReference type="KEGG" id="psp:PSPPH_3899"/>
<dbReference type="eggNOG" id="COG0554">
    <property type="taxonomic scope" value="Bacteria"/>
</dbReference>
<dbReference type="HOGENOM" id="CLU_009281_2_3_6"/>
<dbReference type="UniPathway" id="UPA00618">
    <property type="reaction ID" value="UER00672"/>
</dbReference>
<dbReference type="Proteomes" id="UP000000551">
    <property type="component" value="Chromosome"/>
</dbReference>
<dbReference type="GO" id="GO:0005829">
    <property type="term" value="C:cytosol"/>
    <property type="evidence" value="ECO:0007669"/>
    <property type="project" value="TreeGrafter"/>
</dbReference>
<dbReference type="GO" id="GO:0005524">
    <property type="term" value="F:ATP binding"/>
    <property type="evidence" value="ECO:0007669"/>
    <property type="project" value="UniProtKB-UniRule"/>
</dbReference>
<dbReference type="GO" id="GO:0004370">
    <property type="term" value="F:glycerol kinase activity"/>
    <property type="evidence" value="ECO:0000250"/>
    <property type="project" value="UniProtKB"/>
</dbReference>
<dbReference type="GO" id="GO:0019563">
    <property type="term" value="P:glycerol catabolic process"/>
    <property type="evidence" value="ECO:0007669"/>
    <property type="project" value="UniProtKB-UniRule"/>
</dbReference>
<dbReference type="GO" id="GO:0006071">
    <property type="term" value="P:glycerol metabolic process"/>
    <property type="evidence" value="ECO:0000250"/>
    <property type="project" value="UniProtKB"/>
</dbReference>
<dbReference type="GO" id="GO:0006072">
    <property type="term" value="P:glycerol-3-phosphate metabolic process"/>
    <property type="evidence" value="ECO:0007669"/>
    <property type="project" value="InterPro"/>
</dbReference>
<dbReference type="CDD" id="cd07786">
    <property type="entry name" value="FGGY_EcGK_like"/>
    <property type="match status" value="1"/>
</dbReference>
<dbReference type="FunFam" id="3.30.420.40:FF:000007">
    <property type="entry name" value="Glycerol kinase"/>
    <property type="match status" value="1"/>
</dbReference>
<dbReference type="FunFam" id="3.30.420.40:FF:000008">
    <property type="entry name" value="Glycerol kinase"/>
    <property type="match status" value="1"/>
</dbReference>
<dbReference type="Gene3D" id="3.30.420.40">
    <property type="match status" value="2"/>
</dbReference>
<dbReference type="HAMAP" id="MF_00186">
    <property type="entry name" value="Glycerol_kin"/>
    <property type="match status" value="1"/>
</dbReference>
<dbReference type="InterPro" id="IPR043129">
    <property type="entry name" value="ATPase_NBD"/>
</dbReference>
<dbReference type="InterPro" id="IPR000577">
    <property type="entry name" value="Carb_kinase_FGGY"/>
</dbReference>
<dbReference type="InterPro" id="IPR018483">
    <property type="entry name" value="Carb_kinase_FGGY_CS"/>
</dbReference>
<dbReference type="InterPro" id="IPR018485">
    <property type="entry name" value="FGGY_C"/>
</dbReference>
<dbReference type="InterPro" id="IPR018484">
    <property type="entry name" value="FGGY_N"/>
</dbReference>
<dbReference type="InterPro" id="IPR005999">
    <property type="entry name" value="Glycerol_kin"/>
</dbReference>
<dbReference type="NCBIfam" id="TIGR01311">
    <property type="entry name" value="glycerol_kin"/>
    <property type="match status" value="1"/>
</dbReference>
<dbReference type="NCBIfam" id="NF000756">
    <property type="entry name" value="PRK00047.1"/>
    <property type="match status" value="1"/>
</dbReference>
<dbReference type="PANTHER" id="PTHR10196:SF69">
    <property type="entry name" value="GLYCEROL KINASE"/>
    <property type="match status" value="1"/>
</dbReference>
<dbReference type="PANTHER" id="PTHR10196">
    <property type="entry name" value="SUGAR KINASE"/>
    <property type="match status" value="1"/>
</dbReference>
<dbReference type="Pfam" id="PF02782">
    <property type="entry name" value="FGGY_C"/>
    <property type="match status" value="1"/>
</dbReference>
<dbReference type="Pfam" id="PF00370">
    <property type="entry name" value="FGGY_N"/>
    <property type="match status" value="1"/>
</dbReference>
<dbReference type="PIRSF" id="PIRSF000538">
    <property type="entry name" value="GlpK"/>
    <property type="match status" value="1"/>
</dbReference>
<dbReference type="SUPFAM" id="SSF53067">
    <property type="entry name" value="Actin-like ATPase domain"/>
    <property type="match status" value="2"/>
</dbReference>
<dbReference type="PROSITE" id="PS00933">
    <property type="entry name" value="FGGY_KINASES_1"/>
    <property type="match status" value="1"/>
</dbReference>
<dbReference type="PROSITE" id="PS00445">
    <property type="entry name" value="FGGY_KINASES_2"/>
    <property type="match status" value="1"/>
</dbReference>
<keyword id="KW-0067">ATP-binding</keyword>
<keyword id="KW-0319">Glycerol metabolism</keyword>
<keyword id="KW-0418">Kinase</keyword>
<keyword id="KW-0547">Nucleotide-binding</keyword>
<keyword id="KW-0808">Transferase</keyword>
<protein>
    <recommendedName>
        <fullName evidence="1">Glycerol kinase</fullName>
        <ecNumber evidence="1">2.7.1.30</ecNumber>
    </recommendedName>
    <alternativeName>
        <fullName evidence="1">ATP:glycerol 3-phosphotransferase</fullName>
    </alternativeName>
    <alternativeName>
        <fullName evidence="1">Glycerokinase</fullName>
        <shortName evidence="1">GK</shortName>
    </alternativeName>
</protein>
<sequence>MTDTQNKNYIIALDQGTTSSRAIIFDRDANVVSTAQSEFVQHYPQAGWVEHDPMEIFATQTACMTKALAQADLHHNQIAAIGITNQRETTVIWERDTGRPIYNAIVWQCRRSTEICQQLKRDGLEEYIKDTTGLVIDPYFSGSKVKWILDNVEGSRERARKGELMFGTIDTWLIWKFTGGKVHVTDYTNASRTMLFNIHTLEWDQRMLDVLDIPREILPEVKASSEVYGHSKSGIPIAGIAGDQQAALFGQMCVEPGQAKNTYGTGCFLLMNTGKKAVKSAQGMLTTIGCGPRGEVAYALEGAVFNGGSTVQWLRDELKLINDALDTEYFASKVKDSNGVYLVPAFTGLGAPYWDPYARGALFGLTRGVKVDHIIRAALESIAYQTRDVLDAMQQDSGERLKSLRVDGGAVANNFLMQFQADILGTHVERPQMRETTALGAAFLAGLAIGFWSSLDELRNKAVIERVFEPSCEEAHREKLYAGWQKAVARTRDWEPHENEE</sequence>
<feature type="chain" id="PRO_1000020756" description="Glycerol kinase">
    <location>
        <begin position="1"/>
        <end position="501"/>
    </location>
</feature>
<feature type="binding site" evidence="1">
    <location>
        <position position="17"/>
    </location>
    <ligand>
        <name>ADP</name>
        <dbReference type="ChEBI" id="CHEBI:456216"/>
    </ligand>
</feature>
<feature type="binding site" evidence="1">
    <location>
        <position position="17"/>
    </location>
    <ligand>
        <name>ATP</name>
        <dbReference type="ChEBI" id="CHEBI:30616"/>
    </ligand>
</feature>
<feature type="binding site" evidence="1">
    <location>
        <position position="17"/>
    </location>
    <ligand>
        <name>sn-glycerol 3-phosphate</name>
        <dbReference type="ChEBI" id="CHEBI:57597"/>
    </ligand>
</feature>
<feature type="binding site" evidence="1">
    <location>
        <position position="18"/>
    </location>
    <ligand>
        <name>ATP</name>
        <dbReference type="ChEBI" id="CHEBI:30616"/>
    </ligand>
</feature>
<feature type="binding site" evidence="1">
    <location>
        <position position="19"/>
    </location>
    <ligand>
        <name>ATP</name>
        <dbReference type="ChEBI" id="CHEBI:30616"/>
    </ligand>
</feature>
<feature type="binding site" evidence="1">
    <location>
        <position position="21"/>
    </location>
    <ligand>
        <name>ADP</name>
        <dbReference type="ChEBI" id="CHEBI:456216"/>
    </ligand>
</feature>
<feature type="binding site" evidence="1">
    <location>
        <position position="87"/>
    </location>
    <ligand>
        <name>glycerol</name>
        <dbReference type="ChEBI" id="CHEBI:17754"/>
    </ligand>
</feature>
<feature type="binding site" evidence="1">
    <location>
        <position position="87"/>
    </location>
    <ligand>
        <name>sn-glycerol 3-phosphate</name>
        <dbReference type="ChEBI" id="CHEBI:57597"/>
    </ligand>
</feature>
<feature type="binding site" evidence="1">
    <location>
        <position position="88"/>
    </location>
    <ligand>
        <name>glycerol</name>
        <dbReference type="ChEBI" id="CHEBI:17754"/>
    </ligand>
</feature>
<feature type="binding site" evidence="1">
    <location>
        <position position="88"/>
    </location>
    <ligand>
        <name>sn-glycerol 3-phosphate</name>
        <dbReference type="ChEBI" id="CHEBI:57597"/>
    </ligand>
</feature>
<feature type="binding site" evidence="1">
    <location>
        <position position="139"/>
    </location>
    <ligand>
        <name>glycerol</name>
        <dbReference type="ChEBI" id="CHEBI:17754"/>
    </ligand>
</feature>
<feature type="binding site" evidence="1">
    <location>
        <position position="139"/>
    </location>
    <ligand>
        <name>sn-glycerol 3-phosphate</name>
        <dbReference type="ChEBI" id="CHEBI:57597"/>
    </ligand>
</feature>
<feature type="binding site" evidence="1">
    <location>
        <position position="243"/>
    </location>
    <ligand>
        <name>glycerol</name>
        <dbReference type="ChEBI" id="CHEBI:17754"/>
    </ligand>
</feature>
<feature type="binding site" evidence="1">
    <location>
        <position position="243"/>
    </location>
    <ligand>
        <name>sn-glycerol 3-phosphate</name>
        <dbReference type="ChEBI" id="CHEBI:57597"/>
    </ligand>
</feature>
<feature type="binding site" evidence="1">
    <location>
        <position position="244"/>
    </location>
    <ligand>
        <name>glycerol</name>
        <dbReference type="ChEBI" id="CHEBI:17754"/>
    </ligand>
</feature>
<feature type="binding site" evidence="1">
    <location>
        <position position="265"/>
    </location>
    <ligand>
        <name>ADP</name>
        <dbReference type="ChEBI" id="CHEBI:456216"/>
    </ligand>
</feature>
<feature type="binding site" evidence="1">
    <location>
        <position position="265"/>
    </location>
    <ligand>
        <name>ATP</name>
        <dbReference type="ChEBI" id="CHEBI:30616"/>
    </ligand>
</feature>
<feature type="binding site" evidence="1">
    <location>
        <position position="308"/>
    </location>
    <ligand>
        <name>ADP</name>
        <dbReference type="ChEBI" id="CHEBI:456216"/>
    </ligand>
</feature>
<feature type="binding site" evidence="1">
    <location>
        <position position="308"/>
    </location>
    <ligand>
        <name>ATP</name>
        <dbReference type="ChEBI" id="CHEBI:30616"/>
    </ligand>
</feature>
<feature type="binding site" evidence="1">
    <location>
        <position position="312"/>
    </location>
    <ligand>
        <name>ATP</name>
        <dbReference type="ChEBI" id="CHEBI:30616"/>
    </ligand>
</feature>
<feature type="binding site" evidence="1">
    <location>
        <position position="409"/>
    </location>
    <ligand>
        <name>ADP</name>
        <dbReference type="ChEBI" id="CHEBI:456216"/>
    </ligand>
</feature>
<feature type="binding site" evidence="1">
    <location>
        <position position="409"/>
    </location>
    <ligand>
        <name>ATP</name>
        <dbReference type="ChEBI" id="CHEBI:30616"/>
    </ligand>
</feature>
<feature type="binding site" evidence="1">
    <location>
        <position position="413"/>
    </location>
    <ligand>
        <name>ADP</name>
        <dbReference type="ChEBI" id="CHEBI:456216"/>
    </ligand>
</feature>